<gene>
    <name type="primary">Pno1</name>
</gene>
<organism>
    <name type="scientific">Rattus norvegicus</name>
    <name type="common">Rat</name>
    <dbReference type="NCBI Taxonomy" id="10116"/>
    <lineage>
        <taxon>Eukaryota</taxon>
        <taxon>Metazoa</taxon>
        <taxon>Chordata</taxon>
        <taxon>Craniata</taxon>
        <taxon>Vertebrata</taxon>
        <taxon>Euteleostomi</taxon>
        <taxon>Mammalia</taxon>
        <taxon>Eutheria</taxon>
        <taxon>Euarchontoglires</taxon>
        <taxon>Glires</taxon>
        <taxon>Rodentia</taxon>
        <taxon>Myomorpha</taxon>
        <taxon>Muroidea</taxon>
        <taxon>Muridae</taxon>
        <taxon>Murinae</taxon>
        <taxon>Rattus</taxon>
    </lineage>
</organism>
<name>PNO1_RAT</name>
<protein>
    <recommendedName>
        <fullName>RNA-binding protein PNO1</fullName>
    </recommendedName>
</protein>
<reference key="1">
    <citation type="journal article" date="2004" name="DNA Seq.">
        <title>Cloning and characterization of a novel human RNA binding protein gene PNO1.</title>
        <authorList>
            <person name="Zhou G.-J."/>
            <person name="Zhang Y."/>
            <person name="Wang J."/>
            <person name="Guo J.H."/>
            <person name="Ni J."/>
            <person name="Zhong Z.-M."/>
            <person name="Wang L.-Q."/>
            <person name="Dang Y.-J."/>
            <person name="Dai J.F."/>
            <person name="Yu L."/>
        </authorList>
    </citation>
    <scope>NUCLEOTIDE SEQUENCE [MRNA]</scope>
    <source>
        <strain>Sprague-Dawley</strain>
    </source>
</reference>
<reference key="2">
    <citation type="journal article" date="2004" name="Genome Res.">
        <title>The status, quality, and expansion of the NIH full-length cDNA project: the Mammalian Gene Collection (MGC).</title>
        <authorList>
            <consortium name="The MGC Project Team"/>
        </authorList>
    </citation>
    <scope>NUCLEOTIDE SEQUENCE [LARGE SCALE MRNA]</scope>
    <source>
        <tissue>Liver</tissue>
    </source>
</reference>
<proteinExistence type="evidence at transcript level"/>
<evidence type="ECO:0000250" key="1">
    <source>
        <dbReference type="UniProtKB" id="Q9NRX1"/>
    </source>
</evidence>
<evidence type="ECO:0000256" key="2">
    <source>
        <dbReference type="SAM" id="MobiDB-lite"/>
    </source>
</evidence>
<evidence type="ECO:0000305" key="3"/>
<keyword id="KW-0539">Nucleus</keyword>
<keyword id="KW-1185">Reference proteome</keyword>
<keyword id="KW-0694">RNA-binding</keyword>
<dbReference type="EMBL" id="AY344057">
    <property type="protein sequence ID" value="AAQ24834.1"/>
    <property type="molecule type" value="mRNA"/>
</dbReference>
<dbReference type="EMBL" id="BC088091">
    <property type="protein sequence ID" value="AAH88091.1"/>
    <property type="molecule type" value="mRNA"/>
</dbReference>
<dbReference type="RefSeq" id="NP_954514.2">
    <property type="nucleotide sequence ID" value="NM_199083.2"/>
</dbReference>
<dbReference type="SMR" id="Q6VBQ8"/>
<dbReference type="FunCoup" id="Q6VBQ8">
    <property type="interactions" value="1932"/>
</dbReference>
<dbReference type="STRING" id="10116.ENSRNOP00000007824"/>
<dbReference type="PhosphoSitePlus" id="Q6VBQ8"/>
<dbReference type="jPOST" id="Q6VBQ8"/>
<dbReference type="PaxDb" id="10116-ENSRNOP00000007824"/>
<dbReference type="GeneID" id="289809"/>
<dbReference type="KEGG" id="rno:289809"/>
<dbReference type="UCSC" id="RGD:727882">
    <property type="organism name" value="rat"/>
</dbReference>
<dbReference type="AGR" id="RGD:727882"/>
<dbReference type="CTD" id="56902"/>
<dbReference type="RGD" id="727882">
    <property type="gene designation" value="Pno1"/>
</dbReference>
<dbReference type="eggNOG" id="KOG3273">
    <property type="taxonomic scope" value="Eukaryota"/>
</dbReference>
<dbReference type="InParanoid" id="Q6VBQ8"/>
<dbReference type="OrthoDB" id="32565at9989"/>
<dbReference type="PhylomeDB" id="Q6VBQ8"/>
<dbReference type="TreeFam" id="TF300114"/>
<dbReference type="Reactome" id="R-RNO-6791226">
    <property type="pathway name" value="Major pathway of rRNA processing in the nucleolus and cytosol"/>
</dbReference>
<dbReference type="PRO" id="PR:Q6VBQ8"/>
<dbReference type="Proteomes" id="UP000002494">
    <property type="component" value="Unplaced"/>
</dbReference>
<dbReference type="GO" id="GO:0005730">
    <property type="term" value="C:nucleolus"/>
    <property type="evidence" value="ECO:0000250"/>
    <property type="project" value="UniProtKB"/>
</dbReference>
<dbReference type="GO" id="GO:0005634">
    <property type="term" value="C:nucleus"/>
    <property type="evidence" value="ECO:0000318"/>
    <property type="project" value="GO_Central"/>
</dbReference>
<dbReference type="GO" id="GO:0032040">
    <property type="term" value="C:small-subunit processome"/>
    <property type="evidence" value="ECO:0000250"/>
    <property type="project" value="UniProtKB"/>
</dbReference>
<dbReference type="GO" id="GO:0003723">
    <property type="term" value="F:RNA binding"/>
    <property type="evidence" value="ECO:0007669"/>
    <property type="project" value="UniProtKB-KW"/>
</dbReference>
<dbReference type="GO" id="GO:0042274">
    <property type="term" value="P:ribosomal small subunit biogenesis"/>
    <property type="evidence" value="ECO:0000250"/>
    <property type="project" value="UniProtKB"/>
</dbReference>
<dbReference type="CDD" id="cd22391">
    <property type="entry name" value="KH-I_PNO1_rpt1"/>
    <property type="match status" value="1"/>
</dbReference>
<dbReference type="CDD" id="cd22392">
    <property type="entry name" value="KH-I_PNO1_rpt2"/>
    <property type="match status" value="1"/>
</dbReference>
<dbReference type="FunFam" id="3.30.1370.10:FF:000009">
    <property type="entry name" value="RNA-binding protein PNO1"/>
    <property type="match status" value="1"/>
</dbReference>
<dbReference type="FunFam" id="3.30.1370.10:FF:000048">
    <property type="entry name" value="RNA-binding protein PNO1 isoform X2"/>
    <property type="match status" value="1"/>
</dbReference>
<dbReference type="Gene3D" id="3.30.1370.10">
    <property type="entry name" value="K Homology domain, type 1"/>
    <property type="match status" value="2"/>
</dbReference>
<dbReference type="InterPro" id="IPR055212">
    <property type="entry name" value="KH-I_PNO1_first"/>
</dbReference>
<dbReference type="InterPro" id="IPR004087">
    <property type="entry name" value="KH_dom"/>
</dbReference>
<dbReference type="InterPro" id="IPR036612">
    <property type="entry name" value="KH_dom_type_1_sf"/>
</dbReference>
<dbReference type="InterPro" id="IPR055211">
    <property type="entry name" value="KH_PNO1_2nd"/>
</dbReference>
<dbReference type="PANTHER" id="PTHR12826">
    <property type="entry name" value="RIBONUCLEASE Y"/>
    <property type="match status" value="1"/>
</dbReference>
<dbReference type="PANTHER" id="PTHR12826:SF13">
    <property type="entry name" value="RNA-BINDING PROTEIN PNO1"/>
    <property type="match status" value="1"/>
</dbReference>
<dbReference type="Pfam" id="PF22891">
    <property type="entry name" value="KH_PNO1_2nd"/>
    <property type="match status" value="1"/>
</dbReference>
<dbReference type="SMART" id="SM00322">
    <property type="entry name" value="KH"/>
    <property type="match status" value="1"/>
</dbReference>
<dbReference type="SUPFAM" id="SSF54791">
    <property type="entry name" value="Eukaryotic type KH-domain (KH-domain type I)"/>
    <property type="match status" value="1"/>
</dbReference>
<accession>Q6VBQ8</accession>
<sequence>METQNTGTEDGFTPVTHRGGRRAKKRQAEQSSAAGQDGDAGRMDTEEARPAKRPVFPPLSGDQLLTGKEETRKIPVPANRYTPLKENWMKIFTPIVEHLGLQIRFNLKSRNVEIRTCKDTKDVSALTKAADFVKAFVLGFQVEDALALIRLDDLFLESFEITDVKPLKGDHLSRAIGRIAGKGGKTKFTIENVTRTRIVLADVKVHILGSFQNIKMARTAICNLILGNPPSKVYGNIRAVASRSADRF</sequence>
<comment type="function">
    <text evidence="1">Part of the small subunit (SSU) processome, first precursor of the small eukaryotic ribosomal subunit. During the assembly of the SSU processome in the nucleolus, many ribosome biogenesis factors, an RNA chaperone and ribosomal proteins associate with the nascent pre-rRNA and work in concert to generate RNA folding, modifications, rearrangements and cleavage as well as targeted degradation of pre-ribosomal RNA by the RNA exosome. Positively regulates dimethylation of two adjacent adenosines in the loop of a conserved hairpin near the 3'-end of 18S rRNA.</text>
</comment>
<comment type="subunit">
    <text evidence="1">Part of the small subunit (SSU) processome, composed of more than 70 proteins and the RNA chaperone small nucleolar RNA (snoRNA) U3.</text>
</comment>
<comment type="subcellular location">
    <subcellularLocation>
        <location evidence="1">Nucleus</location>
        <location evidence="1">Nucleolus</location>
    </subcellularLocation>
</comment>
<comment type="similarity">
    <text evidence="3">Belongs to the PNO1 family.</text>
</comment>
<feature type="chain" id="PRO_0000270542" description="RNA-binding protein PNO1">
    <location>
        <begin position="1"/>
        <end position="248"/>
    </location>
</feature>
<feature type="domain" description="KH">
    <location>
        <begin position="169"/>
        <end position="221"/>
    </location>
</feature>
<feature type="region of interest" description="Disordered" evidence="2">
    <location>
        <begin position="1"/>
        <end position="63"/>
    </location>
</feature>
<feature type="compositionally biased region" description="Basic and acidic residues" evidence="2">
    <location>
        <begin position="39"/>
        <end position="50"/>
    </location>
</feature>